<keyword id="KW-0997">Cell inner membrane</keyword>
<keyword id="KW-1003">Cell membrane</keyword>
<keyword id="KW-0192">Crown gall tumor</keyword>
<keyword id="KW-0472">Membrane</keyword>
<keyword id="KW-0614">Plasmid</keyword>
<keyword id="KW-0812">Transmembrane</keyword>
<keyword id="KW-1133">Transmembrane helix</keyword>
<comment type="function">
    <text>VirB proteins are suggested to act at the bacterial surface and there play an important role in directing T-DNA transfer to plant cells.</text>
</comment>
<comment type="subcellular location">
    <subcellularLocation>
        <location evidence="2">Cell inner membrane</location>
        <topology evidence="2">Single-pass membrane protein</topology>
    </subcellularLocation>
</comment>
<comment type="similarity">
    <text evidence="2">Belongs to the virB8 family.</text>
</comment>
<comment type="sequence caution" evidence="2">
    <conflict type="erroneous initiation">
        <sequence resource="EMBL-CDS" id="CAC15165"/>
    </conflict>
</comment>
<accession>P05357</accession>
<feature type="chain" id="PRO_0000065844" description="Protein virB8">
    <location>
        <begin position="1"/>
        <end position="230"/>
    </location>
</feature>
<feature type="topological domain" description="Cytoplasmic" evidence="1">
    <location>
        <begin position="1"/>
        <end position="38"/>
    </location>
</feature>
<feature type="transmembrane region" description="Helical" evidence="1">
    <location>
        <begin position="39"/>
        <end position="61"/>
    </location>
</feature>
<feature type="topological domain" description="Periplasmic" evidence="1">
    <location>
        <begin position="62"/>
        <end position="230"/>
    </location>
</feature>
<gene>
    <name type="primary">virB8</name>
</gene>
<organism>
    <name type="scientific">Agrobacterium tumefaciens (strain 15955)</name>
    <dbReference type="NCBI Taxonomy" id="190386"/>
    <lineage>
        <taxon>Bacteria</taxon>
        <taxon>Pseudomonadati</taxon>
        <taxon>Pseudomonadota</taxon>
        <taxon>Alphaproteobacteria</taxon>
        <taxon>Hyphomicrobiales</taxon>
        <taxon>Rhizobiaceae</taxon>
        <taxon>Rhizobium/Agrobacterium group</taxon>
        <taxon>Agrobacterium</taxon>
        <taxon>Agrobacterium tumefaciens complex</taxon>
    </lineage>
</organism>
<geneLocation type="plasmid">
    <name>pTi15955</name>
</geneLocation>
<protein>
    <recommendedName>
        <fullName>Protein virB8</fullName>
    </recommendedName>
</protein>
<sequence>MLVARESLAEHYKEVEAFQTARAKSARRLSKIIAAVAAIAILGNVAQAFAIATMVPLSRLVPVYLWIRPDGTVDSEVSISRLPATQEEAVVNASLWEYVRLRESYDADTAQYAYDLVSNFSAPTVRQDYQQFFNYPNPSSPQVILGKRGRVEVEHIASNDVTPSTQQIRYKRTLVVDGKMPVVSTWTATVRYEKVTSLPGRLRLTNPAGLVVTSYQTSEDTVSNVGQGAP</sequence>
<name>VIRB8_AGRT9</name>
<proteinExistence type="inferred from homology"/>
<dbReference type="EMBL" id="X06826">
    <property type="protein sequence ID" value="CAC15165.1"/>
    <property type="status" value="ALT_INIT"/>
    <property type="molecule type" value="Genomic_DNA"/>
</dbReference>
<dbReference type="PIR" id="S00784">
    <property type="entry name" value="B8AG55"/>
</dbReference>
<dbReference type="SMR" id="P05357"/>
<dbReference type="TCDB" id="3.A.7.1.1">
    <property type="family name" value="the type iv (conjugal dna-protein transfer or virb) secretory pathway (ivsp) family"/>
</dbReference>
<dbReference type="GO" id="GO:0005886">
    <property type="term" value="C:plasma membrane"/>
    <property type="evidence" value="ECO:0007669"/>
    <property type="project" value="UniProtKB-SubCell"/>
</dbReference>
<dbReference type="Gene3D" id="3.10.450.230">
    <property type="entry name" value="VirB8 protein"/>
    <property type="match status" value="1"/>
</dbReference>
<dbReference type="InterPro" id="IPR032710">
    <property type="entry name" value="NTF2-like_dom_sf"/>
</dbReference>
<dbReference type="InterPro" id="IPR007430">
    <property type="entry name" value="VirB8"/>
</dbReference>
<dbReference type="NCBIfam" id="NF010439">
    <property type="entry name" value="PRK13865.1"/>
    <property type="match status" value="1"/>
</dbReference>
<dbReference type="Pfam" id="PF04335">
    <property type="entry name" value="VirB8"/>
    <property type="match status" value="1"/>
</dbReference>
<dbReference type="SUPFAM" id="SSF54427">
    <property type="entry name" value="NTF2-like"/>
    <property type="match status" value="1"/>
</dbReference>
<evidence type="ECO:0000255" key="1"/>
<evidence type="ECO:0000305" key="2"/>
<reference key="1">
    <citation type="journal article" date="1988" name="Nucleic Acids Res.">
        <title>Analysis of the complete nucleotide sequence of the Agrobacterium tumefaciens virB operon.</title>
        <authorList>
            <person name="Thompson D.V."/>
            <person name="Melchers L.S."/>
            <person name="Idler K.B."/>
            <person name="Shilperoort R.A."/>
            <person name="Hooykaas P.J.J."/>
        </authorList>
    </citation>
    <scope>NUCLEOTIDE SEQUENCE [GENOMIC DNA]</scope>
</reference>